<reference key="1">
    <citation type="journal article" date="2005" name="Nature">
        <title>Sequencing of Aspergillus nidulans and comparative analysis with A. fumigatus and A. oryzae.</title>
        <authorList>
            <person name="Galagan J.E."/>
            <person name="Calvo S.E."/>
            <person name="Cuomo C."/>
            <person name="Ma L.-J."/>
            <person name="Wortman J.R."/>
            <person name="Batzoglou S."/>
            <person name="Lee S.-I."/>
            <person name="Bastuerkmen M."/>
            <person name="Spevak C.C."/>
            <person name="Clutterbuck J."/>
            <person name="Kapitonov V."/>
            <person name="Jurka J."/>
            <person name="Scazzocchio C."/>
            <person name="Farman M.L."/>
            <person name="Butler J."/>
            <person name="Purcell S."/>
            <person name="Harris S."/>
            <person name="Braus G.H."/>
            <person name="Draht O."/>
            <person name="Busch S."/>
            <person name="D'Enfert C."/>
            <person name="Bouchier C."/>
            <person name="Goldman G.H."/>
            <person name="Bell-Pedersen D."/>
            <person name="Griffiths-Jones S."/>
            <person name="Doonan J.H."/>
            <person name="Yu J."/>
            <person name="Vienken K."/>
            <person name="Pain A."/>
            <person name="Freitag M."/>
            <person name="Selker E.U."/>
            <person name="Archer D.B."/>
            <person name="Penalva M.A."/>
            <person name="Oakley B.R."/>
            <person name="Momany M."/>
            <person name="Tanaka T."/>
            <person name="Kumagai T."/>
            <person name="Asai K."/>
            <person name="Machida M."/>
            <person name="Nierman W.C."/>
            <person name="Denning D.W."/>
            <person name="Caddick M.X."/>
            <person name="Hynes M."/>
            <person name="Paoletti M."/>
            <person name="Fischer R."/>
            <person name="Miller B.L."/>
            <person name="Dyer P.S."/>
            <person name="Sachs M.S."/>
            <person name="Osmani S.A."/>
            <person name="Birren B.W."/>
        </authorList>
    </citation>
    <scope>NUCLEOTIDE SEQUENCE [LARGE SCALE GENOMIC DNA]</scope>
    <source>
        <strain>FGSC A4 / ATCC 38163 / CBS 112.46 / NRRL 194 / M139</strain>
    </source>
</reference>
<reference key="2">
    <citation type="journal article" date="2009" name="Fungal Genet. Biol.">
        <title>The 2008 update of the Aspergillus nidulans genome annotation: a community effort.</title>
        <authorList>
            <person name="Wortman J.R."/>
            <person name="Gilsenan J.M."/>
            <person name="Joardar V."/>
            <person name="Deegan J."/>
            <person name="Clutterbuck J."/>
            <person name="Andersen M.R."/>
            <person name="Archer D."/>
            <person name="Bencina M."/>
            <person name="Braus G."/>
            <person name="Coutinho P."/>
            <person name="von Dohren H."/>
            <person name="Doonan J."/>
            <person name="Driessen A.J."/>
            <person name="Durek P."/>
            <person name="Espeso E."/>
            <person name="Fekete E."/>
            <person name="Flipphi M."/>
            <person name="Estrada C.G."/>
            <person name="Geysens S."/>
            <person name="Goldman G."/>
            <person name="de Groot P.W."/>
            <person name="Hansen K."/>
            <person name="Harris S.D."/>
            <person name="Heinekamp T."/>
            <person name="Helmstaedt K."/>
            <person name="Henrissat B."/>
            <person name="Hofmann G."/>
            <person name="Homan T."/>
            <person name="Horio T."/>
            <person name="Horiuchi H."/>
            <person name="James S."/>
            <person name="Jones M."/>
            <person name="Karaffa L."/>
            <person name="Karanyi Z."/>
            <person name="Kato M."/>
            <person name="Keller N."/>
            <person name="Kelly D.E."/>
            <person name="Kiel J.A."/>
            <person name="Kim J.M."/>
            <person name="van der Klei I.J."/>
            <person name="Klis F.M."/>
            <person name="Kovalchuk A."/>
            <person name="Krasevec N."/>
            <person name="Kubicek C.P."/>
            <person name="Liu B."/>
            <person name="Maccabe A."/>
            <person name="Meyer V."/>
            <person name="Mirabito P."/>
            <person name="Miskei M."/>
            <person name="Mos M."/>
            <person name="Mullins J."/>
            <person name="Nelson D.R."/>
            <person name="Nielsen J."/>
            <person name="Oakley B.R."/>
            <person name="Osmani S.A."/>
            <person name="Pakula T."/>
            <person name="Paszewski A."/>
            <person name="Paulsen I."/>
            <person name="Pilsyk S."/>
            <person name="Pocsi I."/>
            <person name="Punt P.J."/>
            <person name="Ram A.F."/>
            <person name="Ren Q."/>
            <person name="Robellet X."/>
            <person name="Robson G."/>
            <person name="Seiboth B."/>
            <person name="van Solingen P."/>
            <person name="Specht T."/>
            <person name="Sun J."/>
            <person name="Taheri-Talesh N."/>
            <person name="Takeshita N."/>
            <person name="Ussery D."/>
            <person name="vanKuyk P.A."/>
            <person name="Visser H."/>
            <person name="van de Vondervoort P.J."/>
            <person name="de Vries R.P."/>
            <person name="Walton J."/>
            <person name="Xiang X."/>
            <person name="Xiong Y."/>
            <person name="Zeng A.P."/>
            <person name="Brandt B.W."/>
            <person name="Cornell M.J."/>
            <person name="van den Hondel C.A."/>
            <person name="Visser J."/>
            <person name="Oliver S.G."/>
            <person name="Turner G."/>
        </authorList>
    </citation>
    <scope>GENOME REANNOTATION</scope>
    <source>
        <strain>FGSC A4 / ATCC 38163 / CBS 112.46 / NRRL 194 / M139</strain>
    </source>
</reference>
<reference key="3">
    <citation type="journal article" date="2014" name="Angew. Chem. Int. Ed.">
        <title>Non-heme dioxygenase catalyzes atypical oxidations of 6,7-bicyclic systems to form the 6,6-quinolone core of viridicatin-type fungal alkaloids.</title>
        <authorList>
            <person name="Ishikawa N."/>
            <person name="Tanaka H."/>
            <person name="Koyama F."/>
            <person name="Noguchi H."/>
            <person name="Wang C.C."/>
            <person name="Hotta K."/>
            <person name="Watanabe K."/>
        </authorList>
    </citation>
    <scope>FUNCTION</scope>
    <scope>PATHWAY</scope>
</reference>
<name>ASQH2_EMENI</name>
<dbReference type="EC" id="2.5.1.-" evidence="6"/>
<dbReference type="EMBL" id="AACD01000170">
    <property type="protein sequence ID" value="EAA61520.1"/>
    <property type="status" value="ALT_SEQ"/>
    <property type="molecule type" value="Genomic_DNA"/>
</dbReference>
<dbReference type="EMBL" id="BN001306">
    <property type="protein sequence ID" value="CBF82274.1"/>
    <property type="molecule type" value="Genomic_DNA"/>
</dbReference>
<dbReference type="RefSeq" id="XP_682498.1">
    <property type="nucleotide sequence ID" value="XM_677406.1"/>
</dbReference>
<dbReference type="SMR" id="C8VJQ0"/>
<dbReference type="EnsemblFungi" id="CBF82274">
    <property type="protein sequence ID" value="CBF82274"/>
    <property type="gene ID" value="ANIA_11202"/>
</dbReference>
<dbReference type="KEGG" id="ani:ANIA_11194"/>
<dbReference type="VEuPathDB" id="FungiDB:AN11202"/>
<dbReference type="eggNOG" id="ENOG502S2XP">
    <property type="taxonomic scope" value="Eukaryota"/>
</dbReference>
<dbReference type="HOGENOM" id="CLU_037431_0_0_1"/>
<dbReference type="InParanoid" id="C8VJQ0"/>
<dbReference type="OMA" id="IVHASNI"/>
<dbReference type="OrthoDB" id="5392033at2759"/>
<dbReference type="BioCyc" id="MetaCyc:MONOMER-124179"/>
<dbReference type="Proteomes" id="UP000000560">
    <property type="component" value="Chromosome VI"/>
</dbReference>
<dbReference type="GO" id="GO:0016765">
    <property type="term" value="F:transferase activity, transferring alkyl or aryl (other than methyl) groups"/>
    <property type="evidence" value="ECO:0007669"/>
    <property type="project" value="InterPro"/>
</dbReference>
<dbReference type="GO" id="GO:0009820">
    <property type="term" value="P:alkaloid metabolic process"/>
    <property type="evidence" value="ECO:0007669"/>
    <property type="project" value="InterPro"/>
</dbReference>
<dbReference type="CDD" id="cd13929">
    <property type="entry name" value="PT-DMATS_CymD"/>
    <property type="match status" value="1"/>
</dbReference>
<dbReference type="InterPro" id="IPR033964">
    <property type="entry name" value="Aro_prenylTrfase"/>
</dbReference>
<dbReference type="InterPro" id="IPR017795">
    <property type="entry name" value="Aro_prenylTrfase_DMATS"/>
</dbReference>
<dbReference type="NCBIfam" id="TIGR03429">
    <property type="entry name" value="arom_pren_DMATS"/>
    <property type="match status" value="1"/>
</dbReference>
<dbReference type="PANTHER" id="PTHR40627">
    <property type="entry name" value="INDOLE PRENYLTRANSFERASE TDIB-RELATED"/>
    <property type="match status" value="1"/>
</dbReference>
<dbReference type="PANTHER" id="PTHR40627:SF3">
    <property type="entry name" value="PRENYLTRANSFERASE ASQH2-RELATED"/>
    <property type="match status" value="1"/>
</dbReference>
<dbReference type="Pfam" id="PF11991">
    <property type="entry name" value="Trp_DMAT"/>
    <property type="match status" value="1"/>
</dbReference>
<dbReference type="SFLD" id="SFLDS00036">
    <property type="entry name" value="Aromatic_Prenyltransferase"/>
    <property type="match status" value="1"/>
</dbReference>
<dbReference type="SFLD" id="SFLDG01162">
    <property type="entry name" value="I"/>
    <property type="match status" value="1"/>
</dbReference>
<protein>
    <recommendedName>
        <fullName evidence="6">Prenyltransferase asqH2</fullName>
        <ecNumber evidence="6">2.5.1.-</ecNumber>
    </recommendedName>
    <alternativeName>
        <fullName evidence="6">4'-methoxyviridicatin/aspoquinolone biosynthesis cluster protein asqH2</fullName>
    </alternativeName>
    <alternativeName>
        <fullName evidence="6">Aspoquinolone biosynthesis protein H2</fullName>
    </alternativeName>
</protein>
<accession>C8VJQ0</accession>
<accession>Q5AR51</accession>
<sequence length="421" mass="48505">MDRNSFTAYGPATGAITESGEQENDHTKPHTWKTFAKYACFESEAERQWWNDSGALIARFLSLTNGDIDQQYQCLLFVRQVLIPALGPYPPVRRCCINTTEIGMELSLNFQGPGEPVFRVSIDPVSRMTGTPMDPLNINTVNNMITRLASMGIKGFDRTLHHHFTREFCMSEQSMQSYQRDSGEAIAWSQTILAFDFKGGDVVTKQYIWTRHAARASGLHPHSLIRRAISRVENQMHCSAAVELVLEYMETFNADIPVPFFSWDLVDPTQSRFKIYGISWQWSWAKAEEVCTLGGKLNHHDIDLLKKLWHILKLDEFTPTMGFTWNYEIRPGQPKPEVRLYLAICDRSDEEVAQAVVQWFELLGWHERAQSYPETLRYLHKTKSAHTWLSVTVSEKGVYTSLYYHPLGNGSDDFKIRENWF</sequence>
<organism>
    <name type="scientific">Emericella nidulans (strain FGSC A4 / ATCC 38163 / CBS 112.46 / NRRL 194 / M139)</name>
    <name type="common">Aspergillus nidulans</name>
    <dbReference type="NCBI Taxonomy" id="227321"/>
    <lineage>
        <taxon>Eukaryota</taxon>
        <taxon>Fungi</taxon>
        <taxon>Dikarya</taxon>
        <taxon>Ascomycota</taxon>
        <taxon>Pezizomycotina</taxon>
        <taxon>Eurotiomycetes</taxon>
        <taxon>Eurotiomycetidae</taxon>
        <taxon>Eurotiales</taxon>
        <taxon>Aspergillaceae</taxon>
        <taxon>Aspergillus</taxon>
        <taxon>Aspergillus subgen. Nidulantes</taxon>
    </lineage>
</organism>
<evidence type="ECO:0000250" key="1">
    <source>
        <dbReference type="UniProtKB" id="A0A1B2CTB2"/>
    </source>
</evidence>
<evidence type="ECO:0000250" key="2">
    <source>
        <dbReference type="UniProtKB" id="Q50EL0"/>
    </source>
</evidence>
<evidence type="ECO:0000256" key="3">
    <source>
        <dbReference type="SAM" id="MobiDB-lite"/>
    </source>
</evidence>
<evidence type="ECO:0000269" key="4">
    <source>
    </source>
</evidence>
<evidence type="ECO:0000305" key="5"/>
<evidence type="ECO:0000305" key="6">
    <source>
    </source>
</evidence>
<feature type="chain" id="PRO_0000437622" description="Prenyltransferase asqH2">
    <location>
        <begin position="1"/>
        <end position="421"/>
    </location>
</feature>
<feature type="region of interest" description="Disordered" evidence="3">
    <location>
        <begin position="1"/>
        <end position="28"/>
    </location>
</feature>
<feature type="binding site" evidence="2">
    <location>
        <position position="105"/>
    </location>
    <ligand>
        <name>L-tryptophan</name>
        <dbReference type="ChEBI" id="CHEBI:57912"/>
    </ligand>
</feature>
<feature type="binding site" evidence="2">
    <location>
        <position position="119"/>
    </location>
    <ligand>
        <name>substrate</name>
    </ligand>
</feature>
<feature type="binding site" evidence="2">
    <location>
        <position position="272"/>
    </location>
    <ligand>
        <name>substrate</name>
    </ligand>
</feature>
<feature type="binding site" evidence="2">
    <location>
        <position position="274"/>
    </location>
    <ligand>
        <name>substrate</name>
    </ligand>
</feature>
<feature type="binding site" evidence="2">
    <location>
        <position position="276"/>
    </location>
    <ligand>
        <name>substrate</name>
    </ligand>
</feature>
<feature type="binding site" evidence="2">
    <location>
        <position position="341"/>
    </location>
    <ligand>
        <name>substrate</name>
    </ligand>
</feature>
<comment type="function">
    <text evidence="1 4 5">Prenyltransferase; part of the gene cluster that mediates the biosynthesis of the aspoquinolone mycotoxins (PubMed:25251934). Within the pathway, the prenyltransferase asqH2 performs the second alkylation with DMAPP at delta(3') double bond to yield a carbenium ion intermediate, which can be attacked by H(2)O to yield a styrenyl quinolone containing a C3'-hydroxyprenyl chain (By similarity). The first step of the pathway is catalyzed by the nonribosomal peptide synthetase asqK that condenses anthranilic acid and O-methyl-L-tyrosine to produce 4'-methoxycyclopeptin. 4'-methoxycyclopeptin is then converted to 4'-methoxydehydrocyclopeptin by the ketoglutarate-dependent dioxygenase asqJ. AsqJ also converts its first product 4'-methoxydehydrocyclopeptin to 4'-methoxycyclopenin. The following conversion of 4'-methoxycyclopenin into 4'-methoxyviridicatin is catalyzed by the cyclopenase asqI. 4'-methoxyviridicatin is the precursor of quinolone natural products, and is further converted to quinolinone B. The prenyltransferase asqH1 then catalyzes the canonical Friedel-Crafts alkylation of quinolinone B with dimethylallyl cation to yield dimethylallyl quinolone, which is subjected to FAD-dependent dehydrogenation by the FAD-linked oxidoreductase asqF to yield conjugated aryl diene. The delta(3') double bond then serves as the site of the second alkylation with DMAPP catalyzed by the prenyltransferase asqH2 to yield a carbenium ion intermediate, which can be attacked by H(2)O to yield a styrenyl quinolone containing a C3'-hydroxyprenyl chain. The FAD-dependent monooxygenase asqG performs epoxidation of the terminal C7'-C8' olefin. Finally, after dehydratation of the epoxide at C3 by asqC, the quinolone epoxide rearrangement protein asqO catalyzes an enzymatic 3-exo-tet cyclization to yield the cyclopropyl-THF ring system in aspoquinolone (Probable).</text>
</comment>
<comment type="catalytic activity">
    <reaction evidence="1">
        <text>yaequinolone E + dimethylallyl diphosphate + H2O = [(1'E)-3'-hydroxy-3',7'-dimethylocta-1',6'-dien-1'-yl]-quinolinone B + diphosphate</text>
        <dbReference type="Rhea" id="RHEA:74007"/>
        <dbReference type="ChEBI" id="CHEBI:15377"/>
        <dbReference type="ChEBI" id="CHEBI:33019"/>
        <dbReference type="ChEBI" id="CHEBI:57623"/>
        <dbReference type="ChEBI" id="CHEBI:193077"/>
        <dbReference type="ChEBI" id="CHEBI:193078"/>
    </reaction>
    <physiologicalReaction direction="left-to-right" evidence="1">
        <dbReference type="Rhea" id="RHEA:74008"/>
    </physiologicalReaction>
</comment>
<comment type="pathway">
    <text evidence="6">Secondary metabolite biosynthesis.</text>
</comment>
<comment type="pathway">
    <text evidence="6">Alkaloid biosynthesis.</text>
</comment>
<comment type="pathway">
    <text evidence="6">Mycotoxin biosynthesis.</text>
</comment>
<comment type="similarity">
    <text evidence="5">Belongs to the tryptophan dimethylallyltransferase family.</text>
</comment>
<comment type="sequence caution" evidence="5">
    <conflict type="erroneous gene model prediction">
        <sequence resource="EMBL-CDS" id="EAA61520"/>
    </conflict>
    <text>The predicted gene AN9229 has been split into 2 genes: ANIA_11194 and ANIA_1120.</text>
</comment>
<gene>
    <name evidence="6" type="primary">asqH2</name>
    <name type="ORF">AN9229</name>
    <name type="ORF">ANIA_11202</name>
</gene>
<proteinExistence type="inferred from homology"/>
<keyword id="KW-1185">Reference proteome</keyword>
<keyword id="KW-0808">Transferase</keyword>